<evidence type="ECO:0000255" key="1">
    <source>
        <dbReference type="HAMAP-Rule" id="MF_00171"/>
    </source>
</evidence>
<sequence length="274" mass="30377">MRVALGVSYNGQAYNGWQSQPSANTVQDRLEAALGRFATQEVHTICAGRTDAGVHGLMQVVHFDTELQRAPFSWVRGTNTFLPADIAVQWAQPVPDAFHSRACAVARRYAYVLLQSPVRPSVDAGRVGWVFHALDEQAMHKAVQHLLGEHDFTSFRASACQAKSPVKTLHRIDITRRAPPAGESTGTHGCVPCYWRFEFEGNAFLHHMIRNIMGCIVAIGQGLYPPEWMRTVLEARSRDAAAPTFSPDGLYFQGPVYGAEWGLPTRTAAYDWLP</sequence>
<reference key="1">
    <citation type="submission" date="2006-12" db="EMBL/GenBank/DDBJ databases">
        <title>Complete sequence of chromosome 1 of Acidovorax sp. JS42.</title>
        <authorList>
            <person name="Copeland A."/>
            <person name="Lucas S."/>
            <person name="Lapidus A."/>
            <person name="Barry K."/>
            <person name="Detter J.C."/>
            <person name="Glavina del Rio T."/>
            <person name="Dalin E."/>
            <person name="Tice H."/>
            <person name="Pitluck S."/>
            <person name="Chertkov O."/>
            <person name="Brettin T."/>
            <person name="Bruce D."/>
            <person name="Han C."/>
            <person name="Tapia R."/>
            <person name="Gilna P."/>
            <person name="Schmutz J."/>
            <person name="Larimer F."/>
            <person name="Land M."/>
            <person name="Hauser L."/>
            <person name="Kyrpides N."/>
            <person name="Kim E."/>
            <person name="Stahl D."/>
            <person name="Richardson P."/>
        </authorList>
    </citation>
    <scope>NUCLEOTIDE SEQUENCE [LARGE SCALE GENOMIC DNA]</scope>
    <source>
        <strain>JS42</strain>
    </source>
</reference>
<organism>
    <name type="scientific">Acidovorax sp. (strain JS42)</name>
    <dbReference type="NCBI Taxonomy" id="232721"/>
    <lineage>
        <taxon>Bacteria</taxon>
        <taxon>Pseudomonadati</taxon>
        <taxon>Pseudomonadota</taxon>
        <taxon>Betaproteobacteria</taxon>
        <taxon>Burkholderiales</taxon>
        <taxon>Comamonadaceae</taxon>
        <taxon>Acidovorax</taxon>
    </lineage>
</organism>
<name>TRUA_ACISJ</name>
<protein>
    <recommendedName>
        <fullName evidence="1">tRNA pseudouridine synthase A</fullName>
        <ecNumber evidence="1">5.4.99.12</ecNumber>
    </recommendedName>
    <alternativeName>
        <fullName evidence="1">tRNA pseudouridine(38-40) synthase</fullName>
    </alternativeName>
    <alternativeName>
        <fullName evidence="1">tRNA pseudouridylate synthase I</fullName>
    </alternativeName>
    <alternativeName>
        <fullName evidence="1">tRNA-uridine isomerase I</fullName>
    </alternativeName>
</protein>
<keyword id="KW-0413">Isomerase</keyword>
<keyword id="KW-0819">tRNA processing</keyword>
<feature type="chain" id="PRO_1000017033" description="tRNA pseudouridine synthase A">
    <location>
        <begin position="1"/>
        <end position="274"/>
    </location>
</feature>
<feature type="active site" description="Nucleophile" evidence="1">
    <location>
        <position position="51"/>
    </location>
</feature>
<feature type="binding site" evidence="1">
    <location>
        <position position="109"/>
    </location>
    <ligand>
        <name>substrate</name>
    </ligand>
</feature>
<gene>
    <name evidence="1" type="primary">truA</name>
    <name type="ordered locus">Ajs_3237</name>
</gene>
<dbReference type="EC" id="5.4.99.12" evidence="1"/>
<dbReference type="EMBL" id="CP000539">
    <property type="protein sequence ID" value="ABM43360.1"/>
    <property type="molecule type" value="Genomic_DNA"/>
</dbReference>
<dbReference type="SMR" id="A1WAT5"/>
<dbReference type="STRING" id="232721.Ajs_3237"/>
<dbReference type="KEGG" id="ajs:Ajs_3237"/>
<dbReference type="eggNOG" id="COG0101">
    <property type="taxonomic scope" value="Bacteria"/>
</dbReference>
<dbReference type="HOGENOM" id="CLU_014673_0_2_4"/>
<dbReference type="Proteomes" id="UP000000645">
    <property type="component" value="Chromosome"/>
</dbReference>
<dbReference type="GO" id="GO:0003723">
    <property type="term" value="F:RNA binding"/>
    <property type="evidence" value="ECO:0007669"/>
    <property type="project" value="InterPro"/>
</dbReference>
<dbReference type="GO" id="GO:0160147">
    <property type="term" value="F:tRNA pseudouridine(38-40) synthase activity"/>
    <property type="evidence" value="ECO:0007669"/>
    <property type="project" value="UniProtKB-EC"/>
</dbReference>
<dbReference type="GO" id="GO:0031119">
    <property type="term" value="P:tRNA pseudouridine synthesis"/>
    <property type="evidence" value="ECO:0007669"/>
    <property type="project" value="UniProtKB-UniRule"/>
</dbReference>
<dbReference type="CDD" id="cd02570">
    <property type="entry name" value="PseudoU_synth_EcTruA"/>
    <property type="match status" value="1"/>
</dbReference>
<dbReference type="FunFam" id="3.30.70.580:FF:000001">
    <property type="entry name" value="tRNA pseudouridine synthase A"/>
    <property type="match status" value="1"/>
</dbReference>
<dbReference type="Gene3D" id="3.30.70.660">
    <property type="entry name" value="Pseudouridine synthase I, catalytic domain, C-terminal subdomain"/>
    <property type="match status" value="1"/>
</dbReference>
<dbReference type="Gene3D" id="3.30.70.580">
    <property type="entry name" value="Pseudouridine synthase I, catalytic domain, N-terminal subdomain"/>
    <property type="match status" value="1"/>
</dbReference>
<dbReference type="HAMAP" id="MF_00171">
    <property type="entry name" value="TruA"/>
    <property type="match status" value="1"/>
</dbReference>
<dbReference type="InterPro" id="IPR020103">
    <property type="entry name" value="PsdUridine_synth_cat_dom_sf"/>
</dbReference>
<dbReference type="InterPro" id="IPR001406">
    <property type="entry name" value="PsdUridine_synth_TruA"/>
</dbReference>
<dbReference type="InterPro" id="IPR020097">
    <property type="entry name" value="PsdUridine_synth_TruA_a/b_dom"/>
</dbReference>
<dbReference type="InterPro" id="IPR020095">
    <property type="entry name" value="PsdUridine_synth_TruA_C"/>
</dbReference>
<dbReference type="InterPro" id="IPR020094">
    <property type="entry name" value="TruA/RsuA/RluB/E/F_N"/>
</dbReference>
<dbReference type="NCBIfam" id="TIGR00071">
    <property type="entry name" value="hisT_truA"/>
    <property type="match status" value="1"/>
</dbReference>
<dbReference type="PANTHER" id="PTHR11142">
    <property type="entry name" value="PSEUDOURIDYLATE SYNTHASE"/>
    <property type="match status" value="1"/>
</dbReference>
<dbReference type="PANTHER" id="PTHR11142:SF0">
    <property type="entry name" value="TRNA PSEUDOURIDINE SYNTHASE-LIKE 1"/>
    <property type="match status" value="1"/>
</dbReference>
<dbReference type="Pfam" id="PF01416">
    <property type="entry name" value="PseudoU_synth_1"/>
    <property type="match status" value="2"/>
</dbReference>
<dbReference type="PIRSF" id="PIRSF001430">
    <property type="entry name" value="tRNA_psdUrid_synth"/>
    <property type="match status" value="1"/>
</dbReference>
<dbReference type="SUPFAM" id="SSF55120">
    <property type="entry name" value="Pseudouridine synthase"/>
    <property type="match status" value="1"/>
</dbReference>
<comment type="function">
    <text evidence="1">Formation of pseudouridine at positions 38, 39 and 40 in the anticodon stem and loop of transfer RNAs.</text>
</comment>
<comment type="catalytic activity">
    <reaction evidence="1">
        <text>uridine(38/39/40) in tRNA = pseudouridine(38/39/40) in tRNA</text>
        <dbReference type="Rhea" id="RHEA:22376"/>
        <dbReference type="Rhea" id="RHEA-COMP:10085"/>
        <dbReference type="Rhea" id="RHEA-COMP:10087"/>
        <dbReference type="ChEBI" id="CHEBI:65314"/>
        <dbReference type="ChEBI" id="CHEBI:65315"/>
        <dbReference type="EC" id="5.4.99.12"/>
    </reaction>
</comment>
<comment type="subunit">
    <text evidence="1">Homodimer.</text>
</comment>
<comment type="similarity">
    <text evidence="1">Belongs to the tRNA pseudouridine synthase TruA family.</text>
</comment>
<proteinExistence type="inferred from homology"/>
<accession>A1WAT5</accession>